<comment type="function">
    <text evidence="1">Promotes bacterial attachment to multiple substrates, such as fibronectin (Fn), fibrinogen (Fg), elastin peptides and tropoelastin. This confers to S.aureus the ability to invade endothelial cells. Promotes adherence to and aggregation of activated platelets (By similarity).</text>
</comment>
<comment type="subcellular location">
    <subcellularLocation>
        <location evidence="4">Secreted</location>
        <location evidence="4">Cell wall</location>
        <topology evidence="4">Peptidoglycan-anchor</topology>
    </subcellularLocation>
    <text evidence="2">Anchored to the cell wall by sortase A (By similarity).</text>
</comment>
<dbReference type="EMBL" id="BA000033">
    <property type="protein sequence ID" value="BAB96286.1"/>
    <property type="molecule type" value="Genomic_DNA"/>
</dbReference>
<dbReference type="RefSeq" id="WP_000794648.1">
    <property type="nucleotide sequence ID" value="NC_003923.1"/>
</dbReference>
<dbReference type="SMR" id="Q8NUU7"/>
<dbReference type="KEGG" id="sam:MW2421"/>
<dbReference type="HOGENOM" id="CLU_009849_1_0_9"/>
<dbReference type="PRO" id="PR:Q8NUU7"/>
<dbReference type="GO" id="GO:0005576">
    <property type="term" value="C:extracellular region"/>
    <property type="evidence" value="ECO:0007669"/>
    <property type="project" value="UniProtKB-KW"/>
</dbReference>
<dbReference type="GO" id="GO:0007155">
    <property type="term" value="P:cell adhesion"/>
    <property type="evidence" value="ECO:0007669"/>
    <property type="project" value="UniProtKB-KW"/>
</dbReference>
<dbReference type="Gene3D" id="2.60.40.1280">
    <property type="match status" value="1"/>
</dbReference>
<dbReference type="Gene3D" id="2.60.40.1290">
    <property type="match status" value="1"/>
</dbReference>
<dbReference type="InterPro" id="IPR011266">
    <property type="entry name" value="Adhesin_Fg-bd_dom_2"/>
</dbReference>
<dbReference type="InterPro" id="IPR008966">
    <property type="entry name" value="Adhesion_dom_sf"/>
</dbReference>
<dbReference type="InterPro" id="IPR011252">
    <property type="entry name" value="Fibrogen-bd_dom1"/>
</dbReference>
<dbReference type="InterPro" id="IPR004237">
    <property type="entry name" value="Fibron_repeat-bd"/>
</dbReference>
<dbReference type="InterPro" id="IPR019931">
    <property type="entry name" value="LPXTG_anchor"/>
</dbReference>
<dbReference type="InterPro" id="IPR041171">
    <property type="entry name" value="SDR_Ig"/>
</dbReference>
<dbReference type="InterPro" id="IPR005877">
    <property type="entry name" value="YSIRK_signal_dom"/>
</dbReference>
<dbReference type="NCBIfam" id="TIGR01167">
    <property type="entry name" value="LPXTG_anchor"/>
    <property type="match status" value="1"/>
</dbReference>
<dbReference type="NCBIfam" id="TIGR01168">
    <property type="entry name" value="YSIRK_signal"/>
    <property type="match status" value="1"/>
</dbReference>
<dbReference type="Pfam" id="PF17961">
    <property type="entry name" value="Big_8"/>
    <property type="match status" value="1"/>
</dbReference>
<dbReference type="Pfam" id="PF02986">
    <property type="entry name" value="Fn_bind"/>
    <property type="match status" value="3"/>
</dbReference>
<dbReference type="Pfam" id="PF00746">
    <property type="entry name" value="Gram_pos_anchor"/>
    <property type="match status" value="1"/>
</dbReference>
<dbReference type="Pfam" id="PF10425">
    <property type="entry name" value="SdrG_C_C"/>
    <property type="match status" value="1"/>
</dbReference>
<dbReference type="Pfam" id="PF04650">
    <property type="entry name" value="YSIRK_signal"/>
    <property type="match status" value="1"/>
</dbReference>
<dbReference type="SUPFAM" id="SSF49401">
    <property type="entry name" value="Bacterial adhesins"/>
    <property type="match status" value="2"/>
</dbReference>
<dbReference type="PROSITE" id="PS50847">
    <property type="entry name" value="GRAM_POS_ANCHORING"/>
    <property type="match status" value="1"/>
</dbReference>
<organism>
    <name type="scientific">Staphylococcus aureus (strain MW2)</name>
    <dbReference type="NCBI Taxonomy" id="196620"/>
    <lineage>
        <taxon>Bacteria</taxon>
        <taxon>Bacillati</taxon>
        <taxon>Bacillota</taxon>
        <taxon>Bacilli</taxon>
        <taxon>Bacillales</taxon>
        <taxon>Staphylococcaceae</taxon>
        <taxon>Staphylococcus</taxon>
    </lineage>
</organism>
<protein>
    <recommendedName>
        <fullName>Fibronectin-binding protein A</fullName>
    </recommendedName>
</protein>
<feature type="signal peptide" evidence="3">
    <location>
        <begin position="1"/>
        <end position="36"/>
    </location>
</feature>
<feature type="chain" id="PRO_0000313888" description="Fibronectin-binding protein A">
    <location>
        <begin position="37"/>
        <end position="982"/>
    </location>
</feature>
<feature type="propeptide" id="PRO_0000313889" description="Removed by sortase" evidence="4">
    <location>
        <begin position="983"/>
        <end position="1015"/>
    </location>
</feature>
<feature type="repeat" description="B-1">
    <location>
        <begin position="546"/>
        <end position="575"/>
    </location>
</feature>
<feature type="repeat" description="B-2">
    <location>
        <begin position="576"/>
        <end position="605"/>
    </location>
</feature>
<feature type="repeat" description="D-1">
    <location>
        <begin position="746"/>
        <end position="783"/>
    </location>
</feature>
<feature type="repeat" description="D-2">
    <location>
        <begin position="784"/>
        <end position="821"/>
    </location>
</feature>
<feature type="repeat" description="D-3">
    <location>
        <begin position="822"/>
        <end position="860"/>
    </location>
</feature>
<feature type="repeat" description="D-4; truncated">
    <location>
        <begin position="861"/>
        <end position="875"/>
    </location>
</feature>
<feature type="repeat" description="WR 1">
    <location>
        <begin position="876"/>
        <end position="889"/>
    </location>
</feature>
<feature type="repeat" description="WR 2">
    <location>
        <begin position="890"/>
        <end position="903"/>
    </location>
</feature>
<feature type="repeat" description="WR 3">
    <location>
        <begin position="904"/>
        <end position="917"/>
    </location>
</feature>
<feature type="repeat" description="WR 4">
    <location>
        <begin position="918"/>
        <end position="931"/>
    </location>
</feature>
<feature type="repeat" description="WR 5">
    <location>
        <begin position="932"/>
        <end position="945"/>
    </location>
</feature>
<feature type="region of interest" description="Ligand-binding A region">
    <location>
        <begin position="37"/>
        <end position="512"/>
    </location>
</feature>
<feature type="region of interest" description="Disordered" evidence="5">
    <location>
        <begin position="75"/>
        <end position="199"/>
    </location>
</feature>
<feature type="region of interest" description="Fibrinogen/elastin/tropoelastin-binding" evidence="1">
    <location>
        <begin position="194"/>
        <end position="512"/>
    </location>
</feature>
<feature type="region of interest" description="Fibronectin-binding" evidence="1">
    <location>
        <begin position="513"/>
        <end position="873"/>
    </location>
</feature>
<feature type="region of interest" description="2 X approximate tandem repeats">
    <location>
        <begin position="546"/>
        <end position="605"/>
    </location>
</feature>
<feature type="region of interest" description="Disordered" evidence="5">
    <location>
        <begin position="596"/>
        <end position="623"/>
    </location>
</feature>
<feature type="region of interest" description="Disordered" evidence="5">
    <location>
        <begin position="741"/>
        <end position="815"/>
    </location>
</feature>
<feature type="region of interest" description="4 X approximate tandem repeats">
    <location>
        <begin position="746"/>
        <end position="875"/>
    </location>
</feature>
<feature type="region of interest" description="Disordered" evidence="5">
    <location>
        <begin position="828"/>
        <end position="953"/>
    </location>
</feature>
<feature type="region of interest" description="5 X tandem repeats, Pro-rich (WR)">
    <location>
        <begin position="876"/>
        <end position="945"/>
    </location>
</feature>
<feature type="region of interest" description="Disordered" evidence="5">
    <location>
        <begin position="966"/>
        <end position="992"/>
    </location>
</feature>
<feature type="short sequence motif" description="YSIRK-G/S signaling motif" evidence="2">
    <location>
        <begin position="7"/>
        <end position="18"/>
    </location>
</feature>
<feature type="short sequence motif" description="LPXTG sorting signal" evidence="4">
    <location>
        <begin position="979"/>
        <end position="983"/>
    </location>
</feature>
<feature type="compositionally biased region" description="Polar residues" evidence="5">
    <location>
        <begin position="75"/>
        <end position="92"/>
    </location>
</feature>
<feature type="compositionally biased region" description="Basic and acidic residues" evidence="5">
    <location>
        <begin position="112"/>
        <end position="126"/>
    </location>
</feature>
<feature type="compositionally biased region" description="Polar residues" evidence="5">
    <location>
        <begin position="129"/>
        <end position="139"/>
    </location>
</feature>
<feature type="compositionally biased region" description="Basic and acidic residues" evidence="5">
    <location>
        <begin position="179"/>
        <end position="193"/>
    </location>
</feature>
<feature type="compositionally biased region" description="Polar residues" evidence="5">
    <location>
        <begin position="780"/>
        <end position="791"/>
    </location>
</feature>
<feature type="compositionally biased region" description="Basic and acidic residues" evidence="5">
    <location>
        <begin position="828"/>
        <end position="839"/>
    </location>
</feature>
<feature type="compositionally biased region" description="Pro residues" evidence="5">
    <location>
        <begin position="875"/>
        <end position="935"/>
    </location>
</feature>
<feature type="modified residue" description="Pentaglycyl murein peptidoglycan amidated threonine" evidence="4">
    <location>
        <position position="982"/>
    </location>
</feature>
<gene>
    <name type="primary">fnbA</name>
    <name type="ordered locus">MW2421</name>
</gene>
<proteinExistence type="inferred from homology"/>
<accession>Q8NUU7</accession>
<reference key="1">
    <citation type="journal article" date="2002" name="Lancet">
        <title>Genome and virulence determinants of high virulence community-acquired MRSA.</title>
        <authorList>
            <person name="Baba T."/>
            <person name="Takeuchi F."/>
            <person name="Kuroda M."/>
            <person name="Yuzawa H."/>
            <person name="Aoki K."/>
            <person name="Oguchi A."/>
            <person name="Nagai Y."/>
            <person name="Iwama N."/>
            <person name="Asano K."/>
            <person name="Naimi T."/>
            <person name="Kuroda H."/>
            <person name="Cui L."/>
            <person name="Yamamoto K."/>
            <person name="Hiramatsu K."/>
        </authorList>
    </citation>
    <scope>NUCLEOTIDE SEQUENCE [LARGE SCALE GENOMIC DNA]</scope>
    <source>
        <strain>MW2</strain>
    </source>
</reference>
<sequence length="1015" mass="111146">MKNNLRYGIRKHKLGAASVFLGTMIVVGMGQDKEAAASEQKTTTVEENGNSATENKVNETQTTTTNVNTIDETQSYSATATEQPSNATQVTTEEAPKAVQAPQTAQPANLETVKEEVVKEEAKPQVKETTQSQDNSGDQRQVDLTPKKATQNQVAETQVEVAQPRTASESKPRVTRSADVVEAKEASDEKVETGTDVTSKVTVESGSIEAPQGNKVEPHAGQRVVLKYKLKFADGLKRGDYFDFTLSNNVNTYGVSTARKVPEIKNGSVVMATGEILGNGNIRYTFTNEIEHKVEVTANLEINLFIDPKTVQSNGEQKITSKLNGEETEKTIPVVYNPGVSNSYTNVNGSIETFNKESNKFTHIAYIKPMNGNQSNTVSVTGTLTEGSNLAGGQPTVKVYEYLGKKDELPQSVYANTSDTNKFKDVTKEMNGKLSVQDNGSYSLNLDKLDKTYVIHYTGEYLQGSDQVNFRTELYGYPERAYKSYYVYGGYRLTWDNGLVLYSNKADGNGKNGQIIQNNDFEYKEDTAKGTMSGQYDAKQIIETEENQDNTPLDIDYHTAIDGEGGYVDGYIETIEETDSSAIDIDYHTAVDSEAGHVGGYTESSEESNPIDFEESTHENSKHHADVVEYEEDTNPGGGQVTTESNLVEFDEESTKGIVTGAVSDHTTIEDTKEYTTESNLIELVDELPEEHGQAQGPIEEITENNHHISHSGLGTENGHGNYGVIEEIEENSHVDIKSELGYEGGQNSGNQSFEEDTEEDKPKYEQGGNIVDIDFDSVPQIQGQNNGNQSFEEDTEKDKPKYEQGGNIIDIDFDSVPQIHGFNKHTEIIEEDTNKDKPNYQFGGHNSVDFEEDTLPKVSGQNEGQQTIEEDTTPPTPPTPEVPSEPETPTPPTPEVPSEPETPTPPTPEVPSEPETPTPPTPEVPAEPGKPVPPAKEEPKKPSKPVEQGKVVTPVIEINEKVKAVAPTKKAQSKKSELPETGGEESTNKGMLFGGLFSILGLALLRRNKKNNKA</sequence>
<evidence type="ECO:0000250" key="1"/>
<evidence type="ECO:0000250" key="2">
    <source>
        <dbReference type="UniProtKB" id="P14738"/>
    </source>
</evidence>
<evidence type="ECO:0000255" key="3"/>
<evidence type="ECO:0000255" key="4">
    <source>
        <dbReference type="PROSITE-ProRule" id="PRU00477"/>
    </source>
</evidence>
<evidence type="ECO:0000256" key="5">
    <source>
        <dbReference type="SAM" id="MobiDB-lite"/>
    </source>
</evidence>
<name>FNBA_STAAW</name>
<keyword id="KW-0130">Cell adhesion</keyword>
<keyword id="KW-0134">Cell wall</keyword>
<keyword id="KW-0572">Peptidoglycan-anchor</keyword>
<keyword id="KW-0677">Repeat</keyword>
<keyword id="KW-0964">Secreted</keyword>
<keyword id="KW-0732">Signal</keyword>
<keyword id="KW-0843">Virulence</keyword>